<dbReference type="EMBL" id="AK050043">
    <property type="protein sequence ID" value="BAC34045.1"/>
    <property type="molecule type" value="mRNA"/>
</dbReference>
<dbReference type="EMBL" id="AK010353">
    <property type="protein sequence ID" value="BAB26873.1"/>
    <property type="molecule type" value="mRNA"/>
</dbReference>
<dbReference type="EMBL" id="AK017640">
    <property type="protein sequence ID" value="BAB30851.1"/>
    <property type="molecule type" value="mRNA"/>
</dbReference>
<dbReference type="EMBL" id="AK132497">
    <property type="protein sequence ID" value="BAE21204.1"/>
    <property type="molecule type" value="mRNA"/>
</dbReference>
<dbReference type="EMBL" id="AK148058">
    <property type="protein sequence ID" value="BAE28318.1"/>
    <property type="molecule type" value="mRNA"/>
</dbReference>
<dbReference type="EMBL" id="AK163064">
    <property type="protein sequence ID" value="BAE37178.1"/>
    <property type="molecule type" value="mRNA"/>
</dbReference>
<dbReference type="EMBL" id="AK167656">
    <property type="protein sequence ID" value="BAE39707.1"/>
    <property type="molecule type" value="mRNA"/>
</dbReference>
<dbReference type="EMBL" id="AK168417">
    <property type="protein sequence ID" value="BAE40331.1"/>
    <property type="molecule type" value="mRNA"/>
</dbReference>
<dbReference type="EMBL" id="AL645594">
    <property type="status" value="NOT_ANNOTATED_CDS"/>
    <property type="molecule type" value="Genomic_DNA"/>
</dbReference>
<dbReference type="EMBL" id="BC024340">
    <property type="protein sequence ID" value="AAH24340.1"/>
    <property type="molecule type" value="mRNA"/>
</dbReference>
<dbReference type="CCDS" id="CCDS25146.1"/>
<dbReference type="RefSeq" id="NP_080160.2">
    <property type="nucleotide sequence ID" value="NM_025884.4"/>
</dbReference>
<dbReference type="SMR" id="Q8R1N0"/>
<dbReference type="BioGRID" id="211854">
    <property type="interactions" value="2"/>
</dbReference>
<dbReference type="FunCoup" id="Q8R1N0">
    <property type="interactions" value="4121"/>
</dbReference>
<dbReference type="STRING" id="10090.ENSMUSP00000056154"/>
<dbReference type="iPTMnet" id="Q8R1N0"/>
<dbReference type="PhosphoSitePlus" id="Q8R1N0"/>
<dbReference type="jPOST" id="Q8R1N0"/>
<dbReference type="PaxDb" id="10090-ENSMUSP00000056154"/>
<dbReference type="PeptideAtlas" id="Q8R1N0"/>
<dbReference type="ProteomicsDB" id="275037"/>
<dbReference type="Pumba" id="Q8R1N0"/>
<dbReference type="Antibodypedia" id="15518">
    <property type="antibodies" value="106 antibodies from 22 providers"/>
</dbReference>
<dbReference type="Ensembl" id="ENSMUST00000056677.8">
    <property type="protein sequence ID" value="ENSMUSP00000056154.7"/>
    <property type="gene ID" value="ENSMUSG00000046010.8"/>
</dbReference>
<dbReference type="GeneID" id="66983"/>
<dbReference type="KEGG" id="mmu:66983"/>
<dbReference type="UCSC" id="uc007kmy.1">
    <property type="organism name" value="mouse"/>
</dbReference>
<dbReference type="AGR" id="MGI:1914233"/>
<dbReference type="CTD" id="66983"/>
<dbReference type="MGI" id="MGI:1914233">
    <property type="gene designation" value="Zfp830"/>
</dbReference>
<dbReference type="VEuPathDB" id="HostDB:ENSMUSG00000046010"/>
<dbReference type="eggNOG" id="KOG3032">
    <property type="taxonomic scope" value="Eukaryota"/>
</dbReference>
<dbReference type="GeneTree" id="ENSGT00390000012151"/>
<dbReference type="HOGENOM" id="CLU_058140_1_0_1"/>
<dbReference type="InParanoid" id="Q8R1N0"/>
<dbReference type="OMA" id="KQPPDAQ"/>
<dbReference type="OrthoDB" id="77607at2759"/>
<dbReference type="PhylomeDB" id="Q8R1N0"/>
<dbReference type="TreeFam" id="TF315895"/>
<dbReference type="Reactome" id="R-MMU-6781823">
    <property type="pathway name" value="Formation of TC-NER Pre-Incision Complex"/>
</dbReference>
<dbReference type="Reactome" id="R-MMU-6782135">
    <property type="pathway name" value="Dual incision in TC-NER"/>
</dbReference>
<dbReference type="Reactome" id="R-MMU-6782210">
    <property type="pathway name" value="Gap-filling DNA repair synthesis and ligation in TC-NER"/>
</dbReference>
<dbReference type="Reactome" id="R-MMU-72163">
    <property type="pathway name" value="mRNA Splicing - Major Pathway"/>
</dbReference>
<dbReference type="BioGRID-ORCS" id="66983">
    <property type="hits" value="19 hits in 78 CRISPR screens"/>
</dbReference>
<dbReference type="ChiTaRS" id="Zfp830">
    <property type="organism name" value="mouse"/>
</dbReference>
<dbReference type="PRO" id="PR:Q8R1N0"/>
<dbReference type="Proteomes" id="UP000000589">
    <property type="component" value="Chromosome 11"/>
</dbReference>
<dbReference type="RNAct" id="Q8R1N0">
    <property type="molecule type" value="protein"/>
</dbReference>
<dbReference type="Bgee" id="ENSMUSG00000046010">
    <property type="expression patterns" value="Expressed in ear vesicle and 253 other cell types or tissues"/>
</dbReference>
<dbReference type="GO" id="GO:0005694">
    <property type="term" value="C:chromosome"/>
    <property type="evidence" value="ECO:0007669"/>
    <property type="project" value="UniProtKB-SubCell"/>
</dbReference>
<dbReference type="GO" id="GO:0016607">
    <property type="term" value="C:nuclear speck"/>
    <property type="evidence" value="ECO:0000314"/>
    <property type="project" value="MGI"/>
</dbReference>
<dbReference type="GO" id="GO:0005634">
    <property type="term" value="C:nucleus"/>
    <property type="evidence" value="ECO:0000314"/>
    <property type="project" value="MGI"/>
</dbReference>
<dbReference type="GO" id="GO:0005681">
    <property type="term" value="C:spliceosomal complex"/>
    <property type="evidence" value="ECO:0007669"/>
    <property type="project" value="UniProtKB-KW"/>
</dbReference>
<dbReference type="GO" id="GO:0003676">
    <property type="term" value="F:nucleic acid binding"/>
    <property type="evidence" value="ECO:0007669"/>
    <property type="project" value="InterPro"/>
</dbReference>
<dbReference type="GO" id="GO:0008270">
    <property type="term" value="F:zinc ion binding"/>
    <property type="evidence" value="ECO:0007669"/>
    <property type="project" value="UniProtKB-KW"/>
</dbReference>
<dbReference type="GO" id="GO:0001832">
    <property type="term" value="P:blastocyst growth"/>
    <property type="evidence" value="ECO:0000315"/>
    <property type="project" value="MGI"/>
</dbReference>
<dbReference type="GO" id="GO:0051301">
    <property type="term" value="P:cell division"/>
    <property type="evidence" value="ECO:0007669"/>
    <property type="project" value="UniProtKB-KW"/>
</dbReference>
<dbReference type="GO" id="GO:0051276">
    <property type="term" value="P:chromosome organization"/>
    <property type="evidence" value="ECO:0000315"/>
    <property type="project" value="MGI"/>
</dbReference>
<dbReference type="GO" id="GO:0060729">
    <property type="term" value="P:intestinal epithelial structure maintenance"/>
    <property type="evidence" value="ECO:0000315"/>
    <property type="project" value="MGI"/>
</dbReference>
<dbReference type="GO" id="GO:0000278">
    <property type="term" value="P:mitotic cell cycle"/>
    <property type="evidence" value="ECO:0000315"/>
    <property type="project" value="MGI"/>
</dbReference>
<dbReference type="GO" id="GO:0044773">
    <property type="term" value="P:mitotic DNA damage checkpoint signaling"/>
    <property type="evidence" value="ECO:0000315"/>
    <property type="project" value="MGI"/>
</dbReference>
<dbReference type="GO" id="GO:0033314">
    <property type="term" value="P:mitotic DNA replication checkpoint signaling"/>
    <property type="evidence" value="ECO:0000315"/>
    <property type="project" value="UniProtKB"/>
</dbReference>
<dbReference type="GO" id="GO:0006397">
    <property type="term" value="P:mRNA processing"/>
    <property type="evidence" value="ECO:0007669"/>
    <property type="project" value="UniProtKB-KW"/>
</dbReference>
<dbReference type="GO" id="GO:0043066">
    <property type="term" value="P:negative regulation of apoptotic process"/>
    <property type="evidence" value="ECO:0000315"/>
    <property type="project" value="UniProtKB"/>
</dbReference>
<dbReference type="GO" id="GO:0033260">
    <property type="term" value="P:nuclear DNA replication"/>
    <property type="evidence" value="ECO:0000315"/>
    <property type="project" value="MGI"/>
</dbReference>
<dbReference type="GO" id="GO:0001541">
    <property type="term" value="P:ovarian follicle development"/>
    <property type="evidence" value="ECO:0000315"/>
    <property type="project" value="UniProtKB"/>
</dbReference>
<dbReference type="GO" id="GO:0001546">
    <property type="term" value="P:preantral ovarian follicle growth"/>
    <property type="evidence" value="ECO:0000315"/>
    <property type="project" value="UniProtKB"/>
</dbReference>
<dbReference type="GO" id="GO:0006396">
    <property type="term" value="P:RNA processing"/>
    <property type="evidence" value="ECO:0000315"/>
    <property type="project" value="UniProtKB"/>
</dbReference>
<dbReference type="GO" id="GO:0008380">
    <property type="term" value="P:RNA splicing"/>
    <property type="evidence" value="ECO:0007669"/>
    <property type="project" value="UniProtKB-KW"/>
</dbReference>
<dbReference type="FunFam" id="3.30.160.60:FF:001398">
    <property type="entry name" value="zinc finger protein 830"/>
    <property type="match status" value="1"/>
</dbReference>
<dbReference type="Gene3D" id="3.30.160.60">
    <property type="entry name" value="Classic Zinc Finger"/>
    <property type="match status" value="1"/>
</dbReference>
<dbReference type="InterPro" id="IPR003604">
    <property type="entry name" value="Matrin/U1-like-C_Znf_C2H2"/>
</dbReference>
<dbReference type="InterPro" id="IPR040050">
    <property type="entry name" value="ZNF830-like"/>
</dbReference>
<dbReference type="InterPro" id="IPR036236">
    <property type="entry name" value="Znf_C2H2_sf"/>
</dbReference>
<dbReference type="InterPro" id="IPR013087">
    <property type="entry name" value="Znf_C2H2_type"/>
</dbReference>
<dbReference type="PANTHER" id="PTHR13278">
    <property type="entry name" value="ZINC FINGER PROTEIN 830"/>
    <property type="match status" value="1"/>
</dbReference>
<dbReference type="PANTHER" id="PTHR13278:SF0">
    <property type="entry name" value="ZINC FINGER PROTEIN 830"/>
    <property type="match status" value="1"/>
</dbReference>
<dbReference type="Pfam" id="PF12874">
    <property type="entry name" value="zf-met"/>
    <property type="match status" value="1"/>
</dbReference>
<dbReference type="Pfam" id="PF23406">
    <property type="entry name" value="ZNF380_CC"/>
    <property type="match status" value="1"/>
</dbReference>
<dbReference type="SMART" id="SM00451">
    <property type="entry name" value="ZnF_U1"/>
    <property type="match status" value="1"/>
</dbReference>
<dbReference type="SUPFAM" id="SSF57667">
    <property type="entry name" value="beta-beta-alpha zinc fingers"/>
    <property type="match status" value="1"/>
</dbReference>
<dbReference type="PROSITE" id="PS00028">
    <property type="entry name" value="ZINC_FINGER_C2H2_1"/>
    <property type="match status" value="1"/>
</dbReference>
<reference key="1">
    <citation type="journal article" date="2005" name="Science">
        <title>The transcriptional landscape of the mammalian genome.</title>
        <authorList>
            <person name="Carninci P."/>
            <person name="Kasukawa T."/>
            <person name="Katayama S."/>
            <person name="Gough J."/>
            <person name="Frith M.C."/>
            <person name="Maeda N."/>
            <person name="Oyama R."/>
            <person name="Ravasi T."/>
            <person name="Lenhard B."/>
            <person name="Wells C."/>
            <person name="Kodzius R."/>
            <person name="Shimokawa K."/>
            <person name="Bajic V.B."/>
            <person name="Brenner S.E."/>
            <person name="Batalov S."/>
            <person name="Forrest A.R."/>
            <person name="Zavolan M."/>
            <person name="Davis M.J."/>
            <person name="Wilming L.G."/>
            <person name="Aidinis V."/>
            <person name="Allen J.E."/>
            <person name="Ambesi-Impiombato A."/>
            <person name="Apweiler R."/>
            <person name="Aturaliya R.N."/>
            <person name="Bailey T.L."/>
            <person name="Bansal M."/>
            <person name="Baxter L."/>
            <person name="Beisel K.W."/>
            <person name="Bersano T."/>
            <person name="Bono H."/>
            <person name="Chalk A.M."/>
            <person name="Chiu K.P."/>
            <person name="Choudhary V."/>
            <person name="Christoffels A."/>
            <person name="Clutterbuck D.R."/>
            <person name="Crowe M.L."/>
            <person name="Dalla E."/>
            <person name="Dalrymple B.P."/>
            <person name="de Bono B."/>
            <person name="Della Gatta G."/>
            <person name="di Bernardo D."/>
            <person name="Down T."/>
            <person name="Engstrom P."/>
            <person name="Fagiolini M."/>
            <person name="Faulkner G."/>
            <person name="Fletcher C.F."/>
            <person name="Fukushima T."/>
            <person name="Furuno M."/>
            <person name="Futaki S."/>
            <person name="Gariboldi M."/>
            <person name="Georgii-Hemming P."/>
            <person name="Gingeras T.R."/>
            <person name="Gojobori T."/>
            <person name="Green R.E."/>
            <person name="Gustincich S."/>
            <person name="Harbers M."/>
            <person name="Hayashi Y."/>
            <person name="Hensch T.K."/>
            <person name="Hirokawa N."/>
            <person name="Hill D."/>
            <person name="Huminiecki L."/>
            <person name="Iacono M."/>
            <person name="Ikeo K."/>
            <person name="Iwama A."/>
            <person name="Ishikawa T."/>
            <person name="Jakt M."/>
            <person name="Kanapin A."/>
            <person name="Katoh M."/>
            <person name="Kawasawa Y."/>
            <person name="Kelso J."/>
            <person name="Kitamura H."/>
            <person name="Kitano H."/>
            <person name="Kollias G."/>
            <person name="Krishnan S.P."/>
            <person name="Kruger A."/>
            <person name="Kummerfeld S.K."/>
            <person name="Kurochkin I.V."/>
            <person name="Lareau L.F."/>
            <person name="Lazarevic D."/>
            <person name="Lipovich L."/>
            <person name="Liu J."/>
            <person name="Liuni S."/>
            <person name="McWilliam S."/>
            <person name="Madan Babu M."/>
            <person name="Madera M."/>
            <person name="Marchionni L."/>
            <person name="Matsuda H."/>
            <person name="Matsuzawa S."/>
            <person name="Miki H."/>
            <person name="Mignone F."/>
            <person name="Miyake S."/>
            <person name="Morris K."/>
            <person name="Mottagui-Tabar S."/>
            <person name="Mulder N."/>
            <person name="Nakano N."/>
            <person name="Nakauchi H."/>
            <person name="Ng P."/>
            <person name="Nilsson R."/>
            <person name="Nishiguchi S."/>
            <person name="Nishikawa S."/>
            <person name="Nori F."/>
            <person name="Ohara O."/>
            <person name="Okazaki Y."/>
            <person name="Orlando V."/>
            <person name="Pang K.C."/>
            <person name="Pavan W.J."/>
            <person name="Pavesi G."/>
            <person name="Pesole G."/>
            <person name="Petrovsky N."/>
            <person name="Piazza S."/>
            <person name="Reed J."/>
            <person name="Reid J.F."/>
            <person name="Ring B.Z."/>
            <person name="Ringwald M."/>
            <person name="Rost B."/>
            <person name="Ruan Y."/>
            <person name="Salzberg S.L."/>
            <person name="Sandelin A."/>
            <person name="Schneider C."/>
            <person name="Schoenbach C."/>
            <person name="Sekiguchi K."/>
            <person name="Semple C.A."/>
            <person name="Seno S."/>
            <person name="Sessa L."/>
            <person name="Sheng Y."/>
            <person name="Shibata Y."/>
            <person name="Shimada H."/>
            <person name="Shimada K."/>
            <person name="Silva D."/>
            <person name="Sinclair B."/>
            <person name="Sperling S."/>
            <person name="Stupka E."/>
            <person name="Sugiura K."/>
            <person name="Sultana R."/>
            <person name="Takenaka Y."/>
            <person name="Taki K."/>
            <person name="Tammoja K."/>
            <person name="Tan S.L."/>
            <person name="Tang S."/>
            <person name="Taylor M.S."/>
            <person name="Tegner J."/>
            <person name="Teichmann S.A."/>
            <person name="Ueda H.R."/>
            <person name="van Nimwegen E."/>
            <person name="Verardo R."/>
            <person name="Wei C.L."/>
            <person name="Yagi K."/>
            <person name="Yamanishi H."/>
            <person name="Zabarovsky E."/>
            <person name="Zhu S."/>
            <person name="Zimmer A."/>
            <person name="Hide W."/>
            <person name="Bult C."/>
            <person name="Grimmond S.M."/>
            <person name="Teasdale R.D."/>
            <person name="Liu E.T."/>
            <person name="Brusic V."/>
            <person name="Quackenbush J."/>
            <person name="Wahlestedt C."/>
            <person name="Mattick J.S."/>
            <person name="Hume D.A."/>
            <person name="Kai C."/>
            <person name="Sasaki D."/>
            <person name="Tomaru Y."/>
            <person name="Fukuda S."/>
            <person name="Kanamori-Katayama M."/>
            <person name="Suzuki M."/>
            <person name="Aoki J."/>
            <person name="Arakawa T."/>
            <person name="Iida J."/>
            <person name="Imamura K."/>
            <person name="Itoh M."/>
            <person name="Kato T."/>
            <person name="Kawaji H."/>
            <person name="Kawagashira N."/>
            <person name="Kawashima T."/>
            <person name="Kojima M."/>
            <person name="Kondo S."/>
            <person name="Konno H."/>
            <person name="Nakano K."/>
            <person name="Ninomiya N."/>
            <person name="Nishio T."/>
            <person name="Okada M."/>
            <person name="Plessy C."/>
            <person name="Shibata K."/>
            <person name="Shiraki T."/>
            <person name="Suzuki S."/>
            <person name="Tagami M."/>
            <person name="Waki K."/>
            <person name="Watahiki A."/>
            <person name="Okamura-Oho Y."/>
            <person name="Suzuki H."/>
            <person name="Kawai J."/>
            <person name="Hayashizaki Y."/>
        </authorList>
    </citation>
    <scope>NUCLEOTIDE SEQUENCE [LARGE SCALE MRNA]</scope>
    <source>
        <strain>C57BL/6J</strain>
        <tissue>Kidney</tissue>
        <tissue>Liver</tissue>
        <tissue>Skin</tissue>
        <tissue>Thymus</tissue>
    </source>
</reference>
<reference key="2">
    <citation type="journal article" date="2009" name="PLoS Biol.">
        <title>Lineage-specific biology revealed by a finished genome assembly of the mouse.</title>
        <authorList>
            <person name="Church D.M."/>
            <person name="Goodstadt L."/>
            <person name="Hillier L.W."/>
            <person name="Zody M.C."/>
            <person name="Goldstein S."/>
            <person name="She X."/>
            <person name="Bult C.J."/>
            <person name="Agarwala R."/>
            <person name="Cherry J.L."/>
            <person name="DiCuccio M."/>
            <person name="Hlavina W."/>
            <person name="Kapustin Y."/>
            <person name="Meric P."/>
            <person name="Maglott D."/>
            <person name="Birtle Z."/>
            <person name="Marques A.C."/>
            <person name="Graves T."/>
            <person name="Zhou S."/>
            <person name="Teague B."/>
            <person name="Potamousis K."/>
            <person name="Churas C."/>
            <person name="Place M."/>
            <person name="Herschleb J."/>
            <person name="Runnheim R."/>
            <person name="Forrest D."/>
            <person name="Amos-Landgraf J."/>
            <person name="Schwartz D.C."/>
            <person name="Cheng Z."/>
            <person name="Lindblad-Toh K."/>
            <person name="Eichler E.E."/>
            <person name="Ponting C.P."/>
        </authorList>
    </citation>
    <scope>NUCLEOTIDE SEQUENCE [LARGE SCALE GENOMIC DNA]</scope>
    <source>
        <strain>C57BL/6J</strain>
    </source>
</reference>
<reference key="3">
    <citation type="journal article" date="2004" name="Genome Res.">
        <title>The status, quality, and expansion of the NIH full-length cDNA project: the Mammalian Gene Collection (MGC).</title>
        <authorList>
            <consortium name="The MGC Project Team"/>
        </authorList>
    </citation>
    <scope>NUCLEOTIDE SEQUENCE [LARGE SCALE MRNA]</scope>
    <source>
        <strain>FVB/N</strain>
        <tissue>Colon</tissue>
    </source>
</reference>
<reference key="4">
    <citation type="journal article" date="2004" name="Mol. Cell. Proteomics">
        <title>Phosphoproteomic analysis of the developing mouse brain.</title>
        <authorList>
            <person name="Ballif B.A."/>
            <person name="Villen J."/>
            <person name="Beausoleil S.A."/>
            <person name="Schwartz D."/>
            <person name="Gygi S.P."/>
        </authorList>
    </citation>
    <scope>PHOSPHORYLATION [LARGE SCALE ANALYSIS] AT SER-342</scope>
    <scope>IDENTIFICATION BY MASS SPECTROMETRY [LARGE SCALE ANALYSIS]</scope>
    <source>
        <tissue>Embryonic brain</tissue>
    </source>
</reference>
<reference key="5">
    <citation type="journal article" date="2005" name="Mol. Cell. Biol.">
        <title>Impaired mitotic progression and preimplantation lethality in mice lacking OMCG1, a new evolutionarily conserved nuclear protein.</title>
        <authorList>
            <person name="Artus J."/>
            <person name="Vandormael-Pournin S."/>
            <person name="Froedin M."/>
            <person name="Nacerddine K."/>
            <person name="Babinet C."/>
            <person name="Cohen-Tannoudji M."/>
        </authorList>
    </citation>
    <scope>FUNCTION</scope>
    <scope>SUBCELLULAR LOCATION</scope>
    <scope>TISSUE SPECIFICITY</scope>
    <scope>DISRUPTION PHENOTYPE</scope>
    <scope>DEVELOPMENTAL STAGE</scope>
</reference>
<reference key="6">
    <citation type="journal article" date="2007" name="Proc. Natl. Acad. Sci. U.S.A.">
        <title>Large-scale phosphorylation analysis of mouse liver.</title>
        <authorList>
            <person name="Villen J."/>
            <person name="Beausoleil S.A."/>
            <person name="Gerber S.A."/>
            <person name="Gygi S.P."/>
        </authorList>
    </citation>
    <scope>PHOSPHORYLATION [LARGE SCALE ANALYSIS] AT SER-342</scope>
    <scope>IDENTIFICATION BY MASS SPECTROMETRY [LARGE SCALE ANALYSIS]</scope>
    <source>
        <tissue>Liver</tissue>
    </source>
</reference>
<reference key="7">
    <citation type="journal article" date="2007" name="Science">
        <title>ATM and ATR substrate analysis reveals extensive protein networks responsive to DNA damage.</title>
        <authorList>
            <person name="Matsuoka S."/>
            <person name="Ballif B.A."/>
            <person name="Smogorzewska A."/>
            <person name="McDonald E.R. III"/>
            <person name="Hurov K.E."/>
            <person name="Luo J."/>
            <person name="Bakalarski C.E."/>
            <person name="Zhao Z."/>
            <person name="Solimini N."/>
            <person name="Lerenthal Y."/>
            <person name="Shiloh Y."/>
            <person name="Gygi S.P."/>
            <person name="Elledge S.J."/>
        </authorList>
    </citation>
    <scope>PHOSPHORYLATION [LARGE SCALE ANALYSIS] AT SER-342 AND SER-353</scope>
    <scope>IDENTIFICATION BY MASS SPECTROMETRY [LARGE SCALE ANALYSIS]</scope>
    <source>
        <tissue>Embryonic fibroblast</tissue>
    </source>
</reference>
<reference key="8">
    <citation type="journal article" date="2010" name="Cell">
        <title>A tissue-specific atlas of mouse protein phosphorylation and expression.</title>
        <authorList>
            <person name="Huttlin E.L."/>
            <person name="Jedrychowski M.P."/>
            <person name="Elias J.E."/>
            <person name="Goswami T."/>
            <person name="Rad R."/>
            <person name="Beausoleil S.A."/>
            <person name="Villen J."/>
            <person name="Haas W."/>
            <person name="Sowa M.E."/>
            <person name="Gygi S.P."/>
        </authorList>
    </citation>
    <scope>PHOSPHORYLATION [LARGE SCALE ANALYSIS] AT SER-342</scope>
    <scope>IDENTIFICATION BY MASS SPECTROMETRY [LARGE SCALE ANALYSIS]</scope>
    <source>
        <tissue>Brain</tissue>
        <tissue>Brown adipose tissue</tissue>
        <tissue>Heart</tissue>
        <tissue>Kidney</tissue>
        <tissue>Liver</tissue>
        <tissue>Lung</tissue>
        <tissue>Pancreas</tissue>
        <tissue>Spleen</tissue>
        <tissue>Testis</tissue>
    </source>
</reference>
<reference key="9">
    <citation type="journal article" date="2011" name="Cell Cycle">
        <title>DNA-RNA hybrids contribute to the replication dependent genomic instability induced by Omcg1 deficiency.</title>
        <authorList>
            <person name="Houlard M."/>
            <person name="Artus J."/>
            <person name="Leguillier T."/>
            <person name="Vandormael-Pournin S."/>
            <person name="Cohen-Tannoudji M."/>
        </authorList>
    </citation>
    <scope>FUNCTION</scope>
    <scope>PHOSPHORYLATION AT SER-353</scope>
    <scope>SUBCELLULAR LOCATION</scope>
</reference>
<reference key="10">
    <citation type="journal article" date="2012" name="Biol. Open">
        <title>Omcg1 is critically required for mitosis in rapidly dividing mouse intestinal progenitors and embryonic stem cells.</title>
        <authorList>
            <person name="Leguillier T."/>
            <person name="Vandormael-Pournin S."/>
            <person name="Artus J."/>
            <person name="Houlard M."/>
            <person name="Picard C."/>
            <person name="Bernex F."/>
            <person name="Robine S."/>
            <person name="Cohen-Tannoudji M."/>
        </authorList>
    </citation>
    <scope>DISRUPTION PHENOTYPE</scope>
    <scope>FUNCTION</scope>
</reference>
<reference key="11">
    <citation type="journal article" date="2015" name="Cell Death Differ.">
        <title>Oocyte-specific inactivation of Omcg1 leads to DNA damage and c-Abl/TAp63-dependent oocyte death associated with dramatic remodeling of ovarian somatic cells.</title>
        <authorList>
            <person name="Vandormael-Pournin S."/>
            <person name="Guigon C.J."/>
            <person name="Ishaq M."/>
            <person name="Coudouel N."/>
            <person name="Ave P."/>
            <person name="Huerre M."/>
            <person name="Magre S."/>
            <person name="Cohen-Tannoudji J."/>
            <person name="Cohen-Tannoudji M."/>
        </authorList>
    </citation>
    <scope>DISRUPTION PHENOTYPE</scope>
    <scope>TISSUE SPECIFICITY</scope>
    <scope>FUNCTION</scope>
</reference>
<keyword id="KW-0007">Acetylation</keyword>
<keyword id="KW-0131">Cell cycle</keyword>
<keyword id="KW-0132">Cell division</keyword>
<keyword id="KW-0158">Chromosome</keyword>
<keyword id="KW-0175">Coiled coil</keyword>
<keyword id="KW-0217">Developmental protein</keyword>
<keyword id="KW-0479">Metal-binding</keyword>
<keyword id="KW-0498">Mitosis</keyword>
<keyword id="KW-0507">mRNA processing</keyword>
<keyword id="KW-0508">mRNA splicing</keyword>
<keyword id="KW-0539">Nucleus</keyword>
<keyword id="KW-0597">Phosphoprotein</keyword>
<keyword id="KW-1185">Reference proteome</keyword>
<keyword id="KW-0747">Spliceosome</keyword>
<keyword id="KW-0862">Zinc</keyword>
<keyword id="KW-0863">Zinc-finger</keyword>
<protein>
    <recommendedName>
        <fullName evidence="1">Zinc finger protein 830</fullName>
    </recommendedName>
    <alternativeName>
        <fullName evidence="1">Coiled-coil domain-containing protein 16</fullName>
    </alternativeName>
    <alternativeName>
        <fullName evidence="10">Ovus mutant candidate gene 1 protein</fullName>
    </alternativeName>
</protein>
<feature type="initiator methionine" description="Removed" evidence="1">
    <location>
        <position position="1"/>
    </location>
</feature>
<feature type="chain" id="PRO_0000076194" description="Zinc finger protein 830">
    <location>
        <begin position="2"/>
        <end position="363"/>
    </location>
</feature>
<feature type="zinc finger region" description="C2H2-type">
    <location>
        <begin position="53"/>
        <end position="75"/>
    </location>
</feature>
<feature type="region of interest" description="Disordered" evidence="3">
    <location>
        <begin position="81"/>
        <end position="213"/>
    </location>
</feature>
<feature type="coiled-coil region" evidence="2">
    <location>
        <begin position="16"/>
        <end position="40"/>
    </location>
</feature>
<feature type="coiled-coil region" evidence="2">
    <location>
        <begin position="303"/>
        <end position="331"/>
    </location>
</feature>
<feature type="compositionally biased region" description="Polar residues" evidence="3">
    <location>
        <begin position="90"/>
        <end position="99"/>
    </location>
</feature>
<feature type="compositionally biased region" description="Basic and acidic residues" evidence="3">
    <location>
        <begin position="104"/>
        <end position="115"/>
    </location>
</feature>
<feature type="compositionally biased region" description="Low complexity" evidence="3">
    <location>
        <begin position="129"/>
        <end position="143"/>
    </location>
</feature>
<feature type="compositionally biased region" description="Acidic residues" evidence="3">
    <location>
        <begin position="152"/>
        <end position="164"/>
    </location>
</feature>
<feature type="compositionally biased region" description="Basic and acidic residues" evidence="3">
    <location>
        <begin position="165"/>
        <end position="184"/>
    </location>
</feature>
<feature type="compositionally biased region" description="Polar residues" evidence="3">
    <location>
        <begin position="189"/>
        <end position="205"/>
    </location>
</feature>
<feature type="modified residue" description="N-acetylalanine" evidence="1">
    <location>
        <position position="2"/>
    </location>
</feature>
<feature type="modified residue" description="Phosphoserine" evidence="1">
    <location>
        <position position="216"/>
    </location>
</feature>
<feature type="modified residue" description="Phosphoserine" evidence="12 13 14 15">
    <location>
        <position position="342"/>
    </location>
</feature>
<feature type="modified residue" description="Phosphoserine" evidence="5 14">
    <location>
        <position position="353"/>
    </location>
</feature>
<feature type="sequence conflict" description="In Ref. 1; BAB30851." evidence="9" ref="1">
    <original>EL</original>
    <variation>DV</variation>
    <location>
        <begin position="81"/>
        <end position="82"/>
    </location>
</feature>
<feature type="sequence conflict" description="In Ref. 1; BAB26873." evidence="9" ref="1">
    <original>Q</original>
    <variation>L</variation>
    <location>
        <position position="111"/>
    </location>
</feature>
<feature type="sequence conflict" description="In Ref. 1; BAE37178." evidence="9" ref="1">
    <original>C</original>
    <variation>G</variation>
    <location>
        <position position="305"/>
    </location>
</feature>
<feature type="sequence conflict" description="In Ref. 1; BAE37178." evidence="9" ref="1">
    <original>V</original>
    <variation>G</variation>
    <location>
        <position position="309"/>
    </location>
</feature>
<sequence>MASSTSTRTPAGKRVVNQEELRRLMREKQRLSTNRKRIESPFAKYNRLGQLSCALCNTPVKSELLWQTHVLGKQHRERVAELKGAKGATQGPSTGTVPQATKRRATDVESQDAKKAKASAGPQVQPSTSASSANLDAARAAPSKPGLGLLPDYDDEEEEEEEGGGEERRDSSKHLPDAQGKEHSLASPRETTSNVLPNDPFNTNPPKAPLVPHSGSIEKAEIHEKVVERRENTAEALPEGFFDDPEVDAKVRKVDAPKDQMDKEWDEFQKAMRQVNTISEAIVAEEDEEGRLDRQIGEIDEQIECYRRVEKLRNRQDEIKNKLKEVLTIKELQKKEEENVDSDDEGELQDLLSQDWRVKGALL</sequence>
<name>ZN830_MOUSE</name>
<accession>Q8R1N0</accession>
<accession>Q3TR52</accession>
<accession>Q9CWV9</accession>
<accession>Q9CYI6</accession>
<proteinExistence type="evidence at protein level"/>
<evidence type="ECO:0000250" key="1">
    <source>
        <dbReference type="UniProtKB" id="Q96NB3"/>
    </source>
</evidence>
<evidence type="ECO:0000255" key="2"/>
<evidence type="ECO:0000256" key="3">
    <source>
        <dbReference type="SAM" id="MobiDB-lite"/>
    </source>
</evidence>
<evidence type="ECO:0000269" key="4">
    <source>
    </source>
</evidence>
<evidence type="ECO:0000269" key="5">
    <source>
    </source>
</evidence>
<evidence type="ECO:0000269" key="6">
    <source>
    </source>
</evidence>
<evidence type="ECO:0000269" key="7">
    <source>
    </source>
</evidence>
<evidence type="ECO:0000303" key="8">
    <source>
    </source>
</evidence>
<evidence type="ECO:0000305" key="9"/>
<evidence type="ECO:0000305" key="10">
    <source>
    </source>
</evidence>
<evidence type="ECO:0000312" key="11">
    <source>
        <dbReference type="MGI" id="MGI:1914233"/>
    </source>
</evidence>
<evidence type="ECO:0007744" key="12">
    <source>
    </source>
</evidence>
<evidence type="ECO:0007744" key="13">
    <source>
    </source>
</evidence>
<evidence type="ECO:0007744" key="14">
    <source>
    </source>
</evidence>
<evidence type="ECO:0007744" key="15">
    <source>
    </source>
</evidence>
<organism>
    <name type="scientific">Mus musculus</name>
    <name type="common">Mouse</name>
    <dbReference type="NCBI Taxonomy" id="10090"/>
    <lineage>
        <taxon>Eukaryota</taxon>
        <taxon>Metazoa</taxon>
        <taxon>Chordata</taxon>
        <taxon>Craniata</taxon>
        <taxon>Vertebrata</taxon>
        <taxon>Euteleostomi</taxon>
        <taxon>Mammalia</taxon>
        <taxon>Eutheria</taxon>
        <taxon>Euarchontoglires</taxon>
        <taxon>Glires</taxon>
        <taxon>Rodentia</taxon>
        <taxon>Myomorpha</taxon>
        <taxon>Muroidea</taxon>
        <taxon>Muridae</taxon>
        <taxon>Murinae</taxon>
        <taxon>Mus</taxon>
        <taxon>Mus</taxon>
    </lineage>
</organism>
<comment type="function">
    <text evidence="1 4 5 6 7">May play a role in pre-mRNA splicing as component of the spliceosome (By similarity). Acts as an important regulator of the cell cycle that participates in the maintenance of genome integrity (PubMed:15988037, PubMed:21191184, PubMed:23213458, PubMed:25168238). During cell cycle progression in embryonic fibroblast, prevents replication fork collapse, double-strand break formation and cell cycle checkpoint activation (PubMed:21191184). Controls mitotic cell cycle progression and cell survival in rapidly proliferating intestinal epithelium and embryonic stem cells (PubMed:23213458). During the embryo preimplantation, controls different aspects of M phase (PubMed:15988037). During early oocyte growth, plays a role in oocyte survival by preventing chromosomal breaks formation, activation of TP63 and reduction of transcription (PubMed:25168238).</text>
</comment>
<comment type="subunit">
    <text evidence="1">Component of the XAB2 complex, a multimeric protein complex composed of XAB2, PRPF19, AQR, ZNF830, ISY1, and PPIE; this complex binds preferentially to RNA. Interacts with XAB2. Identified in a pentameric intron-binding (IB) complex composed of AQR, XAB2, ISY1, ZNF830 and PPIE that is incorporated into the spliceosome as a preassembled complex. The IB complex does not contain PRPF19.</text>
</comment>
<comment type="subcellular location">
    <subcellularLocation>
        <location evidence="4">Nucleus</location>
    </subcellularLocation>
    <subcellularLocation>
        <location evidence="4">Chromosome</location>
    </subcellularLocation>
    <subcellularLocation>
        <location evidence="5">Nucleus speckle</location>
    </subcellularLocation>
    <text evidence="4">Excluded from nucleolus. In metaphase II oocytes and in mitotic blastomeres, it is detected in cytoplasm, suggesting that it is not associated with chromosomes during mitosis.</text>
</comment>
<comment type="tissue specificity">
    <text evidence="4 7">Widely expressed at low level. Expressed in oocytes from primordial to antral follicles. Also detected in somatic cells of the ovary, namely, in granulosa cells from the pre-antral follicle stage onward (PubMed:25168238).</text>
</comment>
<comment type="developmental stage">
    <text evidence="4">Expressed in preimplantation embryos.</text>
</comment>
<comment type="PTM">
    <text evidence="5">Phosphorylated in response to DNA damage by the cell cycle checkpoint kinases ATR/ATM.</text>
</comment>
<comment type="disruption phenotype">
    <text evidence="4 6 7">Mice die by the end of preimplantation development and exhibit a dramatic reduction in the total cell number, a high mitotic index, and the presence of abnormal mitotic figures. Mice appear unwell with significant loss of body weight and rapidly decline afterwards and die. Mice reveal major alterations of their digestive tract including a distended and filled stomach and an intestine lacking spontaneous peristaltism. The small intestine exhibits a thinner wall, less abundant and stunted villi and highly disorganized crypts. Large portion of the gut are almost devoid of normal epithelial structure (PubMed:23213458). Conditional inactivation of Omcg1 in oocytes leads to sterility and early folliculogenesis arrest (PubMed:25168238).</text>
</comment>
<gene>
    <name evidence="1" type="primary">Znf830</name>
    <name evidence="1" type="synonym">Ccdc16</name>
    <name evidence="8" type="synonym">Omcg1</name>
    <name evidence="11" type="synonym">Zfp830</name>
</gene>